<keyword id="KW-0520">NAD</keyword>
<keyword id="KW-0560">Oxidoreductase</keyword>
<keyword id="KW-0816">Tricarboxylic acid cycle</keyword>
<protein>
    <recommendedName>
        <fullName evidence="2">Malate dehydrogenase</fullName>
        <ecNumber evidence="2">1.1.1.37</ecNumber>
    </recommendedName>
</protein>
<reference key="1">
    <citation type="journal article" date="2010" name="PLoS ONE">
        <title>The complete multipartite genome sequence of Cupriavidus necator JMP134, a versatile pollutant degrader.</title>
        <authorList>
            <person name="Lykidis A."/>
            <person name="Perez-Pantoja D."/>
            <person name="Ledger T."/>
            <person name="Mavromatis K."/>
            <person name="Anderson I.J."/>
            <person name="Ivanova N.N."/>
            <person name="Hooper S.D."/>
            <person name="Lapidus A."/>
            <person name="Lucas S."/>
            <person name="Gonzalez B."/>
            <person name="Kyrpides N.C."/>
        </authorList>
    </citation>
    <scope>NUCLEOTIDE SEQUENCE [LARGE SCALE GENOMIC DNA]</scope>
    <source>
        <strain>JMP134 / LMG 1197</strain>
    </source>
</reference>
<evidence type="ECO:0000250" key="1"/>
<evidence type="ECO:0000255" key="2">
    <source>
        <dbReference type="HAMAP-Rule" id="MF_01517"/>
    </source>
</evidence>
<name>MDH_CUPPJ</name>
<proteinExistence type="inferred from homology"/>
<dbReference type="EC" id="1.1.1.37" evidence="2"/>
<dbReference type="EMBL" id="CP000090">
    <property type="protein sequence ID" value="AAZ61689.1"/>
    <property type="molecule type" value="Genomic_DNA"/>
</dbReference>
<dbReference type="SMR" id="Q46YU4"/>
<dbReference type="STRING" id="264198.Reut_A2327"/>
<dbReference type="KEGG" id="reu:Reut_A2327"/>
<dbReference type="eggNOG" id="COG0039">
    <property type="taxonomic scope" value="Bacteria"/>
</dbReference>
<dbReference type="HOGENOM" id="CLU_040727_2_0_4"/>
<dbReference type="OrthoDB" id="9802969at2"/>
<dbReference type="GO" id="GO:0030060">
    <property type="term" value="F:L-malate dehydrogenase (NAD+) activity"/>
    <property type="evidence" value="ECO:0007669"/>
    <property type="project" value="UniProtKB-UniRule"/>
</dbReference>
<dbReference type="GO" id="GO:0006108">
    <property type="term" value="P:malate metabolic process"/>
    <property type="evidence" value="ECO:0007669"/>
    <property type="project" value="InterPro"/>
</dbReference>
<dbReference type="GO" id="GO:0006099">
    <property type="term" value="P:tricarboxylic acid cycle"/>
    <property type="evidence" value="ECO:0007669"/>
    <property type="project" value="UniProtKB-UniRule"/>
</dbReference>
<dbReference type="CDD" id="cd01338">
    <property type="entry name" value="MDH_chloroplast-like"/>
    <property type="match status" value="1"/>
</dbReference>
<dbReference type="FunFam" id="3.40.50.720:FF:000010">
    <property type="entry name" value="Malate dehydrogenase"/>
    <property type="match status" value="1"/>
</dbReference>
<dbReference type="FunFam" id="3.90.110.10:FF:000002">
    <property type="entry name" value="Malate dehydrogenase"/>
    <property type="match status" value="1"/>
</dbReference>
<dbReference type="Gene3D" id="3.90.110.10">
    <property type="entry name" value="Lactate dehydrogenase/glycoside hydrolase, family 4, C-terminal"/>
    <property type="match status" value="1"/>
</dbReference>
<dbReference type="Gene3D" id="3.40.50.720">
    <property type="entry name" value="NAD(P)-binding Rossmann-like Domain"/>
    <property type="match status" value="1"/>
</dbReference>
<dbReference type="HAMAP" id="MF_01517">
    <property type="entry name" value="Malate_dehydrog_2"/>
    <property type="match status" value="1"/>
</dbReference>
<dbReference type="InterPro" id="IPR001557">
    <property type="entry name" value="L-lactate/malate_DH"/>
</dbReference>
<dbReference type="InterPro" id="IPR022383">
    <property type="entry name" value="Lactate/malate_DH_C"/>
</dbReference>
<dbReference type="InterPro" id="IPR001236">
    <property type="entry name" value="Lactate/malate_DH_N"/>
</dbReference>
<dbReference type="InterPro" id="IPR015955">
    <property type="entry name" value="Lactate_DH/Glyco_Ohase_4_C"/>
</dbReference>
<dbReference type="InterPro" id="IPR010945">
    <property type="entry name" value="Malate_DH_type2"/>
</dbReference>
<dbReference type="InterPro" id="IPR036291">
    <property type="entry name" value="NAD(P)-bd_dom_sf"/>
</dbReference>
<dbReference type="NCBIfam" id="TIGR01759">
    <property type="entry name" value="MalateDH-SF1"/>
    <property type="match status" value="1"/>
</dbReference>
<dbReference type="NCBIfam" id="NF003916">
    <property type="entry name" value="PRK05442.1"/>
    <property type="match status" value="1"/>
</dbReference>
<dbReference type="PANTHER" id="PTHR23382">
    <property type="entry name" value="MALATE DEHYDROGENASE"/>
    <property type="match status" value="1"/>
</dbReference>
<dbReference type="Pfam" id="PF02866">
    <property type="entry name" value="Ldh_1_C"/>
    <property type="match status" value="1"/>
</dbReference>
<dbReference type="Pfam" id="PF00056">
    <property type="entry name" value="Ldh_1_N"/>
    <property type="match status" value="1"/>
</dbReference>
<dbReference type="PIRSF" id="PIRSF000102">
    <property type="entry name" value="Lac_mal_DH"/>
    <property type="match status" value="1"/>
</dbReference>
<dbReference type="SUPFAM" id="SSF56327">
    <property type="entry name" value="LDH C-terminal domain-like"/>
    <property type="match status" value="1"/>
</dbReference>
<dbReference type="SUPFAM" id="SSF51735">
    <property type="entry name" value="NAD(P)-binding Rossmann-fold domains"/>
    <property type="match status" value="1"/>
</dbReference>
<sequence>MAKAPMRVAVTGAAGQIGYSLLFRIANGDMLGKDQPVILQLLDLPQAQAAVKGVVMELEDCAFPLLAGVVITDDPKVAFKDADVALLVGARPRSKGMERKDLLEANAQIFTVQGKALDEVASRNVKVLVVGNPANTNAYIAMKSAPSLPRENFTAMLRLDHNRALSQIAAKTGKPVASIEKMFVWGNHSPTMYADYRYATVDGKSVKDMINDPVWNNDVFLPTVGKRGAAIIEARGLSSAASAANAAIDHVHDWVLGTNGKVVTMGIPSNGEYGIPADTMFGYPVTCANGKYEIVKGLEIDAYSQEKINITLNELEEEKAGVQHLLG</sequence>
<gene>
    <name evidence="2" type="primary">mdh</name>
    <name type="ordered locus">Reut_A2327</name>
</gene>
<comment type="function">
    <text evidence="2">Catalyzes the reversible oxidation of malate to oxaloacetate.</text>
</comment>
<comment type="catalytic activity">
    <reaction evidence="2">
        <text>(S)-malate + NAD(+) = oxaloacetate + NADH + H(+)</text>
        <dbReference type="Rhea" id="RHEA:21432"/>
        <dbReference type="ChEBI" id="CHEBI:15378"/>
        <dbReference type="ChEBI" id="CHEBI:15589"/>
        <dbReference type="ChEBI" id="CHEBI:16452"/>
        <dbReference type="ChEBI" id="CHEBI:57540"/>
        <dbReference type="ChEBI" id="CHEBI:57945"/>
        <dbReference type="EC" id="1.1.1.37"/>
    </reaction>
</comment>
<comment type="similarity">
    <text evidence="2">Belongs to the LDH/MDH superfamily. MDH type 2 family.</text>
</comment>
<organism>
    <name type="scientific">Cupriavidus pinatubonensis (strain JMP 134 / LMG 1197)</name>
    <name type="common">Cupriavidus necator (strain JMP 134)</name>
    <dbReference type="NCBI Taxonomy" id="264198"/>
    <lineage>
        <taxon>Bacteria</taxon>
        <taxon>Pseudomonadati</taxon>
        <taxon>Pseudomonadota</taxon>
        <taxon>Betaproteobacteria</taxon>
        <taxon>Burkholderiales</taxon>
        <taxon>Burkholderiaceae</taxon>
        <taxon>Cupriavidus</taxon>
    </lineage>
</organism>
<accession>Q46YU4</accession>
<feature type="initiator methionine" description="Removed" evidence="1">
    <location>
        <position position="1"/>
    </location>
</feature>
<feature type="chain" id="PRO_0000113390" description="Malate dehydrogenase">
    <location>
        <begin position="2"/>
        <end position="327"/>
    </location>
</feature>
<feature type="active site" description="Proton acceptor" evidence="2">
    <location>
        <position position="188"/>
    </location>
</feature>
<feature type="binding site" evidence="2">
    <location>
        <begin position="12"/>
        <end position="18"/>
    </location>
    <ligand>
        <name>NAD(+)</name>
        <dbReference type="ChEBI" id="CHEBI:57540"/>
    </ligand>
</feature>
<feature type="binding site" evidence="2">
    <location>
        <position position="93"/>
    </location>
    <ligand>
        <name>substrate</name>
    </ligand>
</feature>
<feature type="binding site" evidence="2">
    <location>
        <position position="99"/>
    </location>
    <ligand>
        <name>substrate</name>
    </ligand>
</feature>
<feature type="binding site" evidence="2">
    <location>
        <position position="106"/>
    </location>
    <ligand>
        <name>NAD(+)</name>
        <dbReference type="ChEBI" id="CHEBI:57540"/>
    </ligand>
</feature>
<feature type="binding site" evidence="2">
    <location>
        <position position="113"/>
    </location>
    <ligand>
        <name>NAD(+)</name>
        <dbReference type="ChEBI" id="CHEBI:57540"/>
    </ligand>
</feature>
<feature type="binding site" evidence="2">
    <location>
        <begin position="130"/>
        <end position="132"/>
    </location>
    <ligand>
        <name>NAD(+)</name>
        <dbReference type="ChEBI" id="CHEBI:57540"/>
    </ligand>
</feature>
<feature type="binding site" evidence="2">
    <location>
        <position position="132"/>
    </location>
    <ligand>
        <name>substrate</name>
    </ligand>
</feature>
<feature type="binding site" evidence="2">
    <location>
        <position position="163"/>
    </location>
    <ligand>
        <name>substrate</name>
    </ligand>
</feature>